<name>CCL11_RAT</name>
<feature type="signal peptide" evidence="2">
    <location>
        <begin position="1"/>
        <end position="23"/>
    </location>
</feature>
<feature type="chain" id="PRO_0000005198" description="Eotaxin">
    <location>
        <begin position="24"/>
        <end position="97"/>
    </location>
</feature>
<feature type="glycosylation site" description="O-linked (GalNAc...) threonine" evidence="1">
    <location>
        <position position="94"/>
    </location>
</feature>
<feature type="disulfide bond" evidence="1">
    <location>
        <begin position="32"/>
        <end position="57"/>
    </location>
</feature>
<feature type="disulfide bond" evidence="1">
    <location>
        <begin position="33"/>
        <end position="73"/>
    </location>
</feature>
<evidence type="ECO:0000250" key="1">
    <source>
        <dbReference type="UniProtKB" id="P51671"/>
    </source>
</evidence>
<evidence type="ECO:0000255" key="2"/>
<evidence type="ECO:0000269" key="3">
    <source>
    </source>
</evidence>
<evidence type="ECO:0000305" key="4"/>
<keyword id="KW-0145">Chemotaxis</keyword>
<keyword id="KW-0202">Cytokine</keyword>
<keyword id="KW-1015">Disulfide bond</keyword>
<keyword id="KW-0325">Glycoprotein</keyword>
<keyword id="KW-0395">Inflammatory response</keyword>
<keyword id="KW-1185">Reference proteome</keyword>
<keyword id="KW-0964">Secreted</keyword>
<keyword id="KW-0732">Signal</keyword>
<proteinExistence type="inferred from homology"/>
<dbReference type="EMBL" id="Y08358">
    <property type="protein sequence ID" value="CAA69645.1"/>
    <property type="molecule type" value="mRNA"/>
</dbReference>
<dbReference type="EMBL" id="U96637">
    <property type="protein sequence ID" value="AAB65775.1"/>
    <property type="molecule type" value="mRNA"/>
</dbReference>
<dbReference type="RefSeq" id="NP_062078.1">
    <property type="nucleotide sequence ID" value="NM_019205.2"/>
</dbReference>
<dbReference type="SMR" id="P97545"/>
<dbReference type="FunCoup" id="P97545">
    <property type="interactions" value="195"/>
</dbReference>
<dbReference type="STRING" id="10116.ENSRNOP00000009756"/>
<dbReference type="GlyCosmos" id="P97545">
    <property type="glycosylation" value="1 site, No reported glycans"/>
</dbReference>
<dbReference type="GlyGen" id="P97545">
    <property type="glycosylation" value="1 site"/>
</dbReference>
<dbReference type="PhosphoSitePlus" id="P97545"/>
<dbReference type="PaxDb" id="10116-ENSRNOP00000009756"/>
<dbReference type="Ensembl" id="ENSRNOT00000009756.6">
    <property type="protein sequence ID" value="ENSRNOP00000009756.2"/>
    <property type="gene ID" value="ENSRNOG00000007335.6"/>
</dbReference>
<dbReference type="GeneID" id="29397"/>
<dbReference type="KEGG" id="rno:29397"/>
<dbReference type="AGR" id="RGD:3644"/>
<dbReference type="CTD" id="6356"/>
<dbReference type="RGD" id="3644">
    <property type="gene designation" value="Ccl11"/>
</dbReference>
<dbReference type="eggNOG" id="ENOG502S8M4">
    <property type="taxonomic scope" value="Eukaryota"/>
</dbReference>
<dbReference type="GeneTree" id="ENSGT01130000278316"/>
<dbReference type="HOGENOM" id="CLU_141716_1_0_1"/>
<dbReference type="InParanoid" id="P97545"/>
<dbReference type="OMA" id="SKCPQTA"/>
<dbReference type="OrthoDB" id="8934837at2759"/>
<dbReference type="PhylomeDB" id="P97545"/>
<dbReference type="TreeFam" id="TF334888"/>
<dbReference type="Reactome" id="R-RNO-380108">
    <property type="pathway name" value="Chemokine receptors bind chemokines"/>
</dbReference>
<dbReference type="Reactome" id="R-RNO-418594">
    <property type="pathway name" value="G alpha (i) signalling events"/>
</dbReference>
<dbReference type="PRO" id="PR:P97545"/>
<dbReference type="Proteomes" id="UP000002494">
    <property type="component" value="Chromosome 10"/>
</dbReference>
<dbReference type="Bgee" id="ENSRNOG00000007335">
    <property type="expression patterns" value="Expressed in stomach and 14 other cell types or tissues"/>
</dbReference>
<dbReference type="GO" id="GO:0005576">
    <property type="term" value="C:extracellular region"/>
    <property type="evidence" value="ECO:0000266"/>
    <property type="project" value="RGD"/>
</dbReference>
<dbReference type="GO" id="GO:0005615">
    <property type="term" value="C:extracellular space"/>
    <property type="evidence" value="ECO:0000314"/>
    <property type="project" value="RGD"/>
</dbReference>
<dbReference type="GO" id="GO:0048020">
    <property type="term" value="F:CCR chemokine receptor binding"/>
    <property type="evidence" value="ECO:0000318"/>
    <property type="project" value="GO_Central"/>
</dbReference>
<dbReference type="GO" id="GO:0031728">
    <property type="term" value="F:CCR3 chemokine receptor binding"/>
    <property type="evidence" value="ECO:0000266"/>
    <property type="project" value="RGD"/>
</dbReference>
<dbReference type="GO" id="GO:0008009">
    <property type="term" value="F:chemokine activity"/>
    <property type="evidence" value="ECO:0000314"/>
    <property type="project" value="RGD"/>
</dbReference>
<dbReference type="GO" id="GO:0046983">
    <property type="term" value="F:protein dimerization activity"/>
    <property type="evidence" value="ECO:0000266"/>
    <property type="project" value="RGD"/>
</dbReference>
<dbReference type="GO" id="GO:0048018">
    <property type="term" value="F:receptor ligand activity"/>
    <property type="evidence" value="ECO:0000266"/>
    <property type="project" value="RGD"/>
</dbReference>
<dbReference type="GO" id="GO:0007015">
    <property type="term" value="P:actin filament organization"/>
    <property type="evidence" value="ECO:0000314"/>
    <property type="project" value="RGD"/>
</dbReference>
<dbReference type="GO" id="GO:0061844">
    <property type="term" value="P:antimicrobial humoral immune response mediated by antimicrobial peptide"/>
    <property type="evidence" value="ECO:0000318"/>
    <property type="project" value="GO_Central"/>
</dbReference>
<dbReference type="GO" id="GO:0060444">
    <property type="term" value="P:branching involved in mammary gland duct morphogenesis"/>
    <property type="evidence" value="ECO:0000266"/>
    <property type="project" value="RGD"/>
</dbReference>
<dbReference type="GO" id="GO:0070098">
    <property type="term" value="P:chemokine-mediated signaling pathway"/>
    <property type="evidence" value="ECO:0000318"/>
    <property type="project" value="GO_Central"/>
</dbReference>
<dbReference type="GO" id="GO:0002544">
    <property type="term" value="P:chronic inflammatory response"/>
    <property type="evidence" value="ECO:0000270"/>
    <property type="project" value="RGD"/>
</dbReference>
<dbReference type="GO" id="GO:0007010">
    <property type="term" value="P:cytoskeleton organization"/>
    <property type="evidence" value="ECO:0000266"/>
    <property type="project" value="RGD"/>
</dbReference>
<dbReference type="GO" id="GO:0048245">
    <property type="term" value="P:eosinophil chemotaxis"/>
    <property type="evidence" value="ECO:0000314"/>
    <property type="project" value="RGD"/>
</dbReference>
<dbReference type="GO" id="GO:0070371">
    <property type="term" value="P:ERK1 and ERK2 cascade"/>
    <property type="evidence" value="ECO:0000316"/>
    <property type="project" value="RGD"/>
</dbReference>
<dbReference type="GO" id="GO:0006954">
    <property type="term" value="P:inflammatory response"/>
    <property type="evidence" value="ECO:0000318"/>
    <property type="project" value="GO_Central"/>
</dbReference>
<dbReference type="GO" id="GO:0007611">
    <property type="term" value="P:learning or memory"/>
    <property type="evidence" value="ECO:0000266"/>
    <property type="project" value="RGD"/>
</dbReference>
<dbReference type="GO" id="GO:0060763">
    <property type="term" value="P:mammary duct terminal end bud growth"/>
    <property type="evidence" value="ECO:0000266"/>
    <property type="project" value="RGD"/>
</dbReference>
<dbReference type="GO" id="GO:0002551">
    <property type="term" value="P:mast cell chemotaxis"/>
    <property type="evidence" value="ECO:0000314"/>
    <property type="project" value="RGD"/>
</dbReference>
<dbReference type="GO" id="GO:0050768">
    <property type="term" value="P:negative regulation of neurogenesis"/>
    <property type="evidence" value="ECO:0000266"/>
    <property type="project" value="RGD"/>
</dbReference>
<dbReference type="GO" id="GO:0030838">
    <property type="term" value="P:positive regulation of actin filament polymerization"/>
    <property type="evidence" value="ECO:0000266"/>
    <property type="project" value="RGD"/>
</dbReference>
<dbReference type="GO" id="GO:0045766">
    <property type="term" value="P:positive regulation of angiogenesis"/>
    <property type="evidence" value="ECO:0000266"/>
    <property type="project" value="RGD"/>
</dbReference>
<dbReference type="GO" id="GO:0030335">
    <property type="term" value="P:positive regulation of cell migration"/>
    <property type="evidence" value="ECO:0000266"/>
    <property type="project" value="RGD"/>
</dbReference>
<dbReference type="GO" id="GO:0001938">
    <property type="term" value="P:positive regulation of endothelial cell proliferation"/>
    <property type="evidence" value="ECO:0000266"/>
    <property type="project" value="RGD"/>
</dbReference>
<dbReference type="GO" id="GO:0008360">
    <property type="term" value="P:regulation of cell shape"/>
    <property type="evidence" value="ECO:0000266"/>
    <property type="project" value="RGD"/>
</dbReference>
<dbReference type="GO" id="GO:0035962">
    <property type="term" value="P:response to interleukin-13"/>
    <property type="evidence" value="ECO:0000270"/>
    <property type="project" value="RGD"/>
</dbReference>
<dbReference type="GO" id="GO:0070670">
    <property type="term" value="P:response to interleukin-4"/>
    <property type="evidence" value="ECO:0000270"/>
    <property type="project" value="RGD"/>
</dbReference>
<dbReference type="CDD" id="cd00272">
    <property type="entry name" value="Chemokine_CC"/>
    <property type="match status" value="1"/>
</dbReference>
<dbReference type="FunFam" id="2.40.50.40:FF:000002">
    <property type="entry name" value="C-C motif chemokine"/>
    <property type="match status" value="1"/>
</dbReference>
<dbReference type="Gene3D" id="2.40.50.40">
    <property type="match status" value="1"/>
</dbReference>
<dbReference type="InterPro" id="IPR039809">
    <property type="entry name" value="Chemokine_b/g/d"/>
</dbReference>
<dbReference type="InterPro" id="IPR000827">
    <property type="entry name" value="Chemokine_CC_CS"/>
</dbReference>
<dbReference type="InterPro" id="IPR001811">
    <property type="entry name" value="Chemokine_IL8-like_dom"/>
</dbReference>
<dbReference type="InterPro" id="IPR036048">
    <property type="entry name" value="Interleukin_8-like_sf"/>
</dbReference>
<dbReference type="PANTHER" id="PTHR12015:SF147">
    <property type="entry name" value="C-C MOTIF CHEMOKINE 13"/>
    <property type="match status" value="1"/>
</dbReference>
<dbReference type="PANTHER" id="PTHR12015">
    <property type="entry name" value="SMALL INDUCIBLE CYTOKINE A"/>
    <property type="match status" value="1"/>
</dbReference>
<dbReference type="Pfam" id="PF00048">
    <property type="entry name" value="IL8"/>
    <property type="match status" value="1"/>
</dbReference>
<dbReference type="SMART" id="SM00199">
    <property type="entry name" value="SCY"/>
    <property type="match status" value="1"/>
</dbReference>
<dbReference type="SUPFAM" id="SSF54117">
    <property type="entry name" value="Interleukin 8-like chemokines"/>
    <property type="match status" value="1"/>
</dbReference>
<dbReference type="PROSITE" id="PS00472">
    <property type="entry name" value="SMALL_CYTOKINES_CC"/>
    <property type="match status" value="1"/>
</dbReference>
<protein>
    <recommendedName>
        <fullName>Eotaxin</fullName>
    </recommendedName>
    <alternativeName>
        <fullName>C-C motif chemokine 11</fullName>
    </alternativeName>
    <alternativeName>
        <fullName>Eosinophil chemotactic protein</fullName>
    </alternativeName>
    <alternativeName>
        <fullName>Small-inducible cytokine A11</fullName>
    </alternativeName>
</protein>
<comment type="function">
    <text evidence="1 3">In response to the presence of allergens, this protein directly promotes the accumulation of eosinophils (a prominent feature of allergic inflammatory reactions), but not lymphocytes, macrophages or neutrophils (PubMed:9458816). Binds to CCR3 (By similarity).</text>
</comment>
<comment type="subcellular location">
    <subcellularLocation>
        <location evidence="3">Secreted</location>
    </subcellularLocation>
</comment>
<comment type="similarity">
    <text evidence="4">Belongs to the intercrine beta (chemokine CC) family.</text>
</comment>
<organism>
    <name type="scientific">Rattus norvegicus</name>
    <name type="common">Rat</name>
    <dbReference type="NCBI Taxonomy" id="10116"/>
    <lineage>
        <taxon>Eukaryota</taxon>
        <taxon>Metazoa</taxon>
        <taxon>Chordata</taxon>
        <taxon>Craniata</taxon>
        <taxon>Vertebrata</taxon>
        <taxon>Euteleostomi</taxon>
        <taxon>Mammalia</taxon>
        <taxon>Eutheria</taxon>
        <taxon>Euarchontoglires</taxon>
        <taxon>Glires</taxon>
        <taxon>Rodentia</taxon>
        <taxon>Myomorpha</taxon>
        <taxon>Muroidea</taxon>
        <taxon>Muridae</taxon>
        <taxon>Murinae</taxon>
        <taxon>Rattus</taxon>
    </lineage>
</organism>
<sequence length="97" mass="10851">MQLSTALLFLLLTATSFTSQVLAHPGSIPTSCCFTMTSKKIPNTLLKSYKRITNNRCTLKAIVFKTKLGKEICADPKKKWVQDATKHLDQKLQTPKP</sequence>
<accession>P97545</accession>
<accession>O08780</accession>
<reference key="1">
    <citation type="journal article" date="1998" name="Immunogenetics">
        <title>Conserved structure and tissue expression of rat eotaxin.</title>
        <authorList>
            <person name="Williams C.M."/>
            <person name="Newton D.J."/>
            <person name="Wilson S.A."/>
            <person name="Williams T.J."/>
            <person name="Coleman J.W."/>
            <person name="Flanagan B.F."/>
        </authorList>
    </citation>
    <scope>NUCLEOTIDE SEQUENCE [MRNA]</scope>
</reference>
<reference key="2">
    <citation type="journal article" date="1998" name="Am. J. Physiol.">
        <title>Cloning of rat eotaxin: ozone inhalation increases mRNA and protein expression in lungs of brown Norway rats.</title>
        <authorList>
            <person name="Ishi Y."/>
            <person name="Shirato M."/>
            <person name="Nomura A."/>
            <person name="Sakamoto T."/>
            <person name="Uchida Y."/>
            <person name="Ohtsuka M."/>
            <person name="Sagai M."/>
            <person name="Hasegawa S."/>
        </authorList>
    </citation>
    <scope>NUCLEOTIDE SEQUENCE [MRNA]</scope>
    <scope>FUNCTION</scope>
    <scope>SUBCELLULAR LOCATION</scope>
    <source>
        <tissue>Lung</tissue>
    </source>
</reference>
<gene>
    <name type="primary">Ccl11</name>
    <name type="synonym">Scya11</name>
</gene>